<name>VANL_STRCO</name>
<accession>Q9XAK7</accession>
<dbReference type="EC" id="6.3.2.-"/>
<dbReference type="EMBL" id="AL939117">
    <property type="protein sequence ID" value="CAB45462.1"/>
    <property type="molecule type" value="Genomic_DNA"/>
</dbReference>
<dbReference type="PIR" id="T35363">
    <property type="entry name" value="T35363"/>
</dbReference>
<dbReference type="RefSeq" id="NP_627790.1">
    <property type="nucleotide sequence ID" value="NC_003888.3"/>
</dbReference>
<dbReference type="SMR" id="Q9XAK7"/>
<dbReference type="STRING" id="100226.gene:17761218"/>
<dbReference type="PaxDb" id="100226-SCO3595"/>
<dbReference type="KEGG" id="sco:SCO3595"/>
<dbReference type="PATRIC" id="fig|100226.15.peg.3652"/>
<dbReference type="eggNOG" id="COG1181">
    <property type="taxonomic scope" value="Bacteria"/>
</dbReference>
<dbReference type="HOGENOM" id="CLU_039268_0_0_11"/>
<dbReference type="InParanoid" id="Q9XAK7"/>
<dbReference type="OrthoDB" id="9813261at2"/>
<dbReference type="PhylomeDB" id="Q9XAK7"/>
<dbReference type="Proteomes" id="UP000001973">
    <property type="component" value="Chromosome"/>
</dbReference>
<dbReference type="GO" id="GO:0005829">
    <property type="term" value="C:cytosol"/>
    <property type="evidence" value="ECO:0000318"/>
    <property type="project" value="GO_Central"/>
</dbReference>
<dbReference type="GO" id="GO:0005886">
    <property type="term" value="C:plasma membrane"/>
    <property type="evidence" value="ECO:0007669"/>
    <property type="project" value="UniProtKB-SubCell"/>
</dbReference>
<dbReference type="GO" id="GO:0005524">
    <property type="term" value="F:ATP binding"/>
    <property type="evidence" value="ECO:0007669"/>
    <property type="project" value="UniProtKB-KW"/>
</dbReference>
<dbReference type="GO" id="GO:0008716">
    <property type="term" value="F:D-alanine-D-alanine ligase activity"/>
    <property type="evidence" value="ECO:0000318"/>
    <property type="project" value="GO_Central"/>
</dbReference>
<dbReference type="GO" id="GO:0046872">
    <property type="term" value="F:metal ion binding"/>
    <property type="evidence" value="ECO:0007669"/>
    <property type="project" value="UniProtKB-KW"/>
</dbReference>
<dbReference type="GO" id="GO:0071555">
    <property type="term" value="P:cell wall organization"/>
    <property type="evidence" value="ECO:0007669"/>
    <property type="project" value="UniProtKB-KW"/>
</dbReference>
<dbReference type="GO" id="GO:0009252">
    <property type="term" value="P:peptidoglycan biosynthetic process"/>
    <property type="evidence" value="ECO:0000318"/>
    <property type="project" value="GO_Central"/>
</dbReference>
<dbReference type="GO" id="GO:0008360">
    <property type="term" value="P:regulation of cell shape"/>
    <property type="evidence" value="ECO:0007669"/>
    <property type="project" value="UniProtKB-KW"/>
</dbReference>
<dbReference type="GO" id="GO:0046677">
    <property type="term" value="P:response to antibiotic"/>
    <property type="evidence" value="ECO:0007669"/>
    <property type="project" value="UniProtKB-KW"/>
</dbReference>
<dbReference type="FunFam" id="3.30.470.20:FF:000008">
    <property type="entry name" value="D-alanine--D-alanine ligase"/>
    <property type="match status" value="1"/>
</dbReference>
<dbReference type="Gene3D" id="3.40.50.20">
    <property type="match status" value="1"/>
</dbReference>
<dbReference type="Gene3D" id="3.30.1490.20">
    <property type="entry name" value="ATP-grasp fold, A domain"/>
    <property type="match status" value="1"/>
</dbReference>
<dbReference type="Gene3D" id="3.30.470.20">
    <property type="entry name" value="ATP-grasp fold, B domain"/>
    <property type="match status" value="1"/>
</dbReference>
<dbReference type="HAMAP" id="MF_00047">
    <property type="entry name" value="Dala_Dala_lig"/>
    <property type="match status" value="1"/>
</dbReference>
<dbReference type="InterPro" id="IPR011761">
    <property type="entry name" value="ATP-grasp"/>
</dbReference>
<dbReference type="InterPro" id="IPR013815">
    <property type="entry name" value="ATP_grasp_subdomain_1"/>
</dbReference>
<dbReference type="InterPro" id="IPR000291">
    <property type="entry name" value="D-Ala_lig_Van_CS"/>
</dbReference>
<dbReference type="InterPro" id="IPR005905">
    <property type="entry name" value="D_ala_D_ala"/>
</dbReference>
<dbReference type="InterPro" id="IPR011095">
    <property type="entry name" value="Dala_Dala_lig_C"/>
</dbReference>
<dbReference type="InterPro" id="IPR011127">
    <property type="entry name" value="Dala_Dala_lig_N"/>
</dbReference>
<dbReference type="InterPro" id="IPR016185">
    <property type="entry name" value="PreATP-grasp_dom_sf"/>
</dbReference>
<dbReference type="NCBIfam" id="TIGR01205">
    <property type="entry name" value="D_ala_D_alaTIGR"/>
    <property type="match status" value="1"/>
</dbReference>
<dbReference type="NCBIfam" id="NF000206">
    <property type="entry name" value="D_ala_D_lac"/>
    <property type="match status" value="1"/>
</dbReference>
<dbReference type="NCBIfam" id="NF000129">
    <property type="entry name" value="D_ala_D_lac_Sc"/>
    <property type="match status" value="1"/>
</dbReference>
<dbReference type="NCBIfam" id="NF002528">
    <property type="entry name" value="PRK01966.1-4"/>
    <property type="match status" value="1"/>
</dbReference>
<dbReference type="PANTHER" id="PTHR23132">
    <property type="entry name" value="D-ALANINE--D-ALANINE LIGASE"/>
    <property type="match status" value="1"/>
</dbReference>
<dbReference type="PANTHER" id="PTHR23132:SF25">
    <property type="entry name" value="D-ALANINE--D-ALANINE LIGASE A"/>
    <property type="match status" value="1"/>
</dbReference>
<dbReference type="Pfam" id="PF07478">
    <property type="entry name" value="Dala_Dala_lig_C"/>
    <property type="match status" value="1"/>
</dbReference>
<dbReference type="Pfam" id="PF01820">
    <property type="entry name" value="Dala_Dala_lig_N"/>
    <property type="match status" value="1"/>
</dbReference>
<dbReference type="PIRSF" id="PIRSF039102">
    <property type="entry name" value="Ddl/VanB"/>
    <property type="match status" value="1"/>
</dbReference>
<dbReference type="SUPFAM" id="SSF56059">
    <property type="entry name" value="Glutathione synthetase ATP-binding domain-like"/>
    <property type="match status" value="1"/>
</dbReference>
<dbReference type="SUPFAM" id="SSF52440">
    <property type="entry name" value="PreATP-grasp domain"/>
    <property type="match status" value="1"/>
</dbReference>
<dbReference type="PROSITE" id="PS50975">
    <property type="entry name" value="ATP_GRASP"/>
    <property type="match status" value="1"/>
</dbReference>
<dbReference type="PROSITE" id="PS00843">
    <property type="entry name" value="DALA_DALA_LIGASE_1"/>
    <property type="match status" value="1"/>
</dbReference>
<dbReference type="PROSITE" id="PS00844">
    <property type="entry name" value="DALA_DALA_LIGASE_2"/>
    <property type="match status" value="1"/>
</dbReference>
<evidence type="ECO:0000250" key="1"/>
<evidence type="ECO:0000305" key="2"/>
<sequence>MARLKVGIVFGGSSEEHAVSVKSAQEVARNLDTEKYQPFFVGITKDGAWRLCDGPGQDWENGDCRPVVLSPDRSVHGLLVLEQGQYRSVRLDVVLPVLHGTLGEDGATQGLLELSGIPYVGCDVQSSALCMDKSLAYVVARSAGIATPDFWTVTGDETIDPGRLTYPVFVKPARSGSSFGVSKVCRPEDLATAVESARRYDTKVLIEAAVVGSEVGCAILGNDPDLIVGEVDRIALSHGFFRIHQEEQPENGSENSTPVVPADIPTEKRSLVQETAKAVYRALGCRGLSRVDMFLKEDGEVVLNEVNTLPGMTSYSRYPRMMAAAGLPLSEVIDRTLSLALTGKLR</sequence>
<reference key="1">
    <citation type="journal article" date="2002" name="Nature">
        <title>Complete genome sequence of the model actinomycete Streptomyces coelicolor A3(2).</title>
        <authorList>
            <person name="Bentley S.D."/>
            <person name="Chater K.F."/>
            <person name="Cerdeno-Tarraga A.-M."/>
            <person name="Challis G.L."/>
            <person name="Thomson N.R."/>
            <person name="James K.D."/>
            <person name="Harris D.E."/>
            <person name="Quail M.A."/>
            <person name="Kieser H."/>
            <person name="Harper D."/>
            <person name="Bateman A."/>
            <person name="Brown S."/>
            <person name="Chandra G."/>
            <person name="Chen C.W."/>
            <person name="Collins M."/>
            <person name="Cronin A."/>
            <person name="Fraser A."/>
            <person name="Goble A."/>
            <person name="Hidalgo J."/>
            <person name="Hornsby T."/>
            <person name="Howarth S."/>
            <person name="Huang C.-H."/>
            <person name="Kieser T."/>
            <person name="Larke L."/>
            <person name="Murphy L.D."/>
            <person name="Oliver K."/>
            <person name="O'Neil S."/>
            <person name="Rabbinowitsch E."/>
            <person name="Rajandream M.A."/>
            <person name="Rutherford K.M."/>
            <person name="Rutter S."/>
            <person name="Seeger K."/>
            <person name="Saunders D."/>
            <person name="Sharp S."/>
            <person name="Squares R."/>
            <person name="Squares S."/>
            <person name="Taylor K."/>
            <person name="Warren T."/>
            <person name="Wietzorrek A."/>
            <person name="Woodward J.R."/>
            <person name="Barrell B.G."/>
            <person name="Parkhill J."/>
            <person name="Hopwood D.A."/>
        </authorList>
    </citation>
    <scope>NUCLEOTIDE SEQUENCE [LARGE SCALE GENOMIC DNA]</scope>
    <source>
        <strain>ATCC BAA-471 / A3(2) / M145</strain>
    </source>
</reference>
<proteinExistence type="inferred from homology"/>
<keyword id="KW-0046">Antibiotic resistance</keyword>
<keyword id="KW-0067">ATP-binding</keyword>
<keyword id="KW-1003">Cell membrane</keyword>
<keyword id="KW-0133">Cell shape</keyword>
<keyword id="KW-0961">Cell wall biogenesis/degradation</keyword>
<keyword id="KW-0436">Ligase</keyword>
<keyword id="KW-0460">Magnesium</keyword>
<keyword id="KW-0464">Manganese</keyword>
<keyword id="KW-0472">Membrane</keyword>
<keyword id="KW-0479">Metal-binding</keyword>
<keyword id="KW-0547">Nucleotide-binding</keyword>
<keyword id="KW-0573">Peptidoglycan synthesis</keyword>
<keyword id="KW-1185">Reference proteome</keyword>
<gene>
    <name type="ordered locus">SCO3595</name>
    <name type="ORF">SC66T3.06</name>
</gene>
<organism>
    <name type="scientific">Streptomyces coelicolor (strain ATCC BAA-471 / A3(2) / M145)</name>
    <dbReference type="NCBI Taxonomy" id="100226"/>
    <lineage>
        <taxon>Bacteria</taxon>
        <taxon>Bacillati</taxon>
        <taxon>Actinomycetota</taxon>
        <taxon>Actinomycetes</taxon>
        <taxon>Kitasatosporales</taxon>
        <taxon>Streptomycetaceae</taxon>
        <taxon>Streptomyces</taxon>
        <taxon>Streptomyces albidoflavus group</taxon>
    </lineage>
</organism>
<feature type="chain" id="PRO_0000177920" description="Putative D-alanine--D-lactate ligase">
    <location>
        <begin position="1"/>
        <end position="346"/>
    </location>
</feature>
<feature type="domain" description="ATP-grasp">
    <location>
        <begin position="137"/>
        <end position="338"/>
    </location>
</feature>
<feature type="binding site" evidence="1">
    <location>
        <begin position="163"/>
        <end position="216"/>
    </location>
    <ligand>
        <name>ATP</name>
        <dbReference type="ChEBI" id="CHEBI:30616"/>
    </ligand>
</feature>
<feature type="binding site" evidence="1">
    <location>
        <position position="292"/>
    </location>
    <ligand>
        <name>Mg(2+)</name>
        <dbReference type="ChEBI" id="CHEBI:18420"/>
        <label>1</label>
    </ligand>
</feature>
<feature type="binding site" evidence="1">
    <location>
        <position position="305"/>
    </location>
    <ligand>
        <name>Mg(2+)</name>
        <dbReference type="ChEBI" id="CHEBI:18420"/>
        <label>1</label>
    </ligand>
</feature>
<feature type="binding site" evidence="1">
    <location>
        <position position="305"/>
    </location>
    <ligand>
        <name>Mg(2+)</name>
        <dbReference type="ChEBI" id="CHEBI:18420"/>
        <label>2</label>
    </ligand>
</feature>
<feature type="binding site" evidence="1">
    <location>
        <position position="307"/>
    </location>
    <ligand>
        <name>Mg(2+)</name>
        <dbReference type="ChEBI" id="CHEBI:18420"/>
        <label>2</label>
    </ligand>
</feature>
<comment type="function">
    <text evidence="1">Required for resistance to glycopeptides antibiotics. D-Ala--D-Ala ligase of altered specificity which catalyzes ester bond formation between D-Ala and various D-hydroxy acids; producing a peptidoglycan which does not terminate by D-alanine but by D-lactate, thus preventing vancomycin binding (By similarity).</text>
</comment>
<comment type="cofactor">
    <cofactor evidence="1">
        <name>Mg(2+)</name>
        <dbReference type="ChEBI" id="CHEBI:18420"/>
    </cofactor>
    <cofactor evidence="1">
        <name>Mn(2+)</name>
        <dbReference type="ChEBI" id="CHEBI:29035"/>
    </cofactor>
    <text evidence="1">Binds 2 magnesium or manganese ions per subunit.</text>
</comment>
<comment type="subcellular location">
    <subcellularLocation>
        <location evidence="1">Cell membrane</location>
        <topology evidence="1">Peripheral membrane protein</topology>
        <orientation evidence="1">Cytoplasmic side</orientation>
    </subcellularLocation>
</comment>
<comment type="miscellaneous">
    <text>S.coelicolor was found to be of intermediate resistance to vancomycin although it does not produce vancomycin.</text>
</comment>
<comment type="similarity">
    <text evidence="2">Belongs to the D-alanine--D-alanine ligase family.</text>
</comment>
<protein>
    <recommendedName>
        <fullName>Putative D-alanine--D-lactate ligase</fullName>
        <ecNumber>6.3.2.-</ecNumber>
    </recommendedName>
    <alternativeName>
        <fullName>Vancomycin resistance-like protein</fullName>
    </alternativeName>
</protein>